<protein>
    <recommendedName>
        <fullName evidence="1">Replication restart protein PriB</fullName>
    </recommendedName>
</protein>
<feature type="chain" id="PRO_1000132620" description="Replication restart protein PriB">
    <location>
        <begin position="1"/>
        <end position="104"/>
    </location>
</feature>
<feature type="domain" description="SSB" evidence="1">
    <location>
        <begin position="1"/>
        <end position="101"/>
    </location>
</feature>
<evidence type="ECO:0000255" key="1">
    <source>
        <dbReference type="HAMAP-Rule" id="MF_00720"/>
    </source>
</evidence>
<comment type="function">
    <text evidence="1">Involved in the restart of stalled replication forks, which reloads the replicative helicase on sites other than the origin of replication; the PriA-PriB pathway is the major replication restart pathway. During primosome assembly it facilitates complex formation between PriA and DnaT on DNA; stabilizes PriA on DNA. Stimulates the DNA unwinding activity of PriA helicase.</text>
</comment>
<comment type="subunit">
    <text evidence="1">Homodimer. Interacts with PriA and DnaT. Component of the replication restart primosome. Primosome assembly occurs via a 'hand-off' mechanism. PriA binds to replication forks, subsequently PriB then DnaT bind; DnaT then displaces ssDNA to generate the helicase loading substrate.</text>
</comment>
<comment type="similarity">
    <text evidence="1">Belongs to the PriB family.</text>
</comment>
<proteinExistence type="inferred from homology"/>
<reference key="1">
    <citation type="journal article" date="2009" name="PLoS Genet.">
        <title>Organised genome dynamics in the Escherichia coli species results in highly diverse adaptive paths.</title>
        <authorList>
            <person name="Touchon M."/>
            <person name="Hoede C."/>
            <person name="Tenaillon O."/>
            <person name="Barbe V."/>
            <person name="Baeriswyl S."/>
            <person name="Bidet P."/>
            <person name="Bingen E."/>
            <person name="Bonacorsi S."/>
            <person name="Bouchier C."/>
            <person name="Bouvet O."/>
            <person name="Calteau A."/>
            <person name="Chiapello H."/>
            <person name="Clermont O."/>
            <person name="Cruveiller S."/>
            <person name="Danchin A."/>
            <person name="Diard M."/>
            <person name="Dossat C."/>
            <person name="Karoui M.E."/>
            <person name="Frapy E."/>
            <person name="Garry L."/>
            <person name="Ghigo J.M."/>
            <person name="Gilles A.M."/>
            <person name="Johnson J."/>
            <person name="Le Bouguenec C."/>
            <person name="Lescat M."/>
            <person name="Mangenot S."/>
            <person name="Martinez-Jehanne V."/>
            <person name="Matic I."/>
            <person name="Nassif X."/>
            <person name="Oztas S."/>
            <person name="Petit M.A."/>
            <person name="Pichon C."/>
            <person name="Rouy Z."/>
            <person name="Ruf C.S."/>
            <person name="Schneider D."/>
            <person name="Tourret J."/>
            <person name="Vacherie B."/>
            <person name="Vallenet D."/>
            <person name="Medigue C."/>
            <person name="Rocha E.P.C."/>
            <person name="Denamur E."/>
        </authorList>
    </citation>
    <scope>NUCLEOTIDE SEQUENCE [LARGE SCALE GENOMIC DNA]</scope>
    <source>
        <strain>UMN026 / ExPEC</strain>
    </source>
</reference>
<organism>
    <name type="scientific">Escherichia coli O17:K52:H18 (strain UMN026 / ExPEC)</name>
    <dbReference type="NCBI Taxonomy" id="585056"/>
    <lineage>
        <taxon>Bacteria</taxon>
        <taxon>Pseudomonadati</taxon>
        <taxon>Pseudomonadota</taxon>
        <taxon>Gammaproteobacteria</taxon>
        <taxon>Enterobacterales</taxon>
        <taxon>Enterobacteriaceae</taxon>
        <taxon>Escherichia</taxon>
    </lineage>
</organism>
<sequence>MTNRLVLSGTVCRTPLRKVSPSGIPHCQFVLEHRSVQEEAGFHRQAWCQMPVIVSGHENQAITHSITVGSRITVQGFISCHKAKNGLSKMVLHAEQIELIDSGD</sequence>
<dbReference type="EMBL" id="CU928163">
    <property type="protein sequence ID" value="CAR15847.1"/>
    <property type="molecule type" value="Genomic_DNA"/>
</dbReference>
<dbReference type="RefSeq" id="WP_001296681.1">
    <property type="nucleotide sequence ID" value="NC_011751.1"/>
</dbReference>
<dbReference type="RefSeq" id="YP_002415331.1">
    <property type="nucleotide sequence ID" value="NC_011751.1"/>
</dbReference>
<dbReference type="SMR" id="B7NGD5"/>
<dbReference type="STRING" id="585056.ECUMN_4734"/>
<dbReference type="GeneID" id="93777622"/>
<dbReference type="KEGG" id="eum:ECUMN_4734"/>
<dbReference type="PATRIC" id="fig|585056.7.peg.4897"/>
<dbReference type="HOGENOM" id="CLU_166075_0_0_6"/>
<dbReference type="Proteomes" id="UP000007097">
    <property type="component" value="Chromosome"/>
</dbReference>
<dbReference type="GO" id="GO:1990077">
    <property type="term" value="C:primosome complex"/>
    <property type="evidence" value="ECO:0007669"/>
    <property type="project" value="UniProtKB-KW"/>
</dbReference>
<dbReference type="GO" id="GO:0003697">
    <property type="term" value="F:single-stranded DNA binding"/>
    <property type="evidence" value="ECO:0007669"/>
    <property type="project" value="UniProtKB-UniRule"/>
</dbReference>
<dbReference type="GO" id="GO:0006269">
    <property type="term" value="P:DNA replication, synthesis of primer"/>
    <property type="evidence" value="ECO:0007669"/>
    <property type="project" value="UniProtKB-KW"/>
</dbReference>
<dbReference type="CDD" id="cd04496">
    <property type="entry name" value="SSB_OBF"/>
    <property type="match status" value="1"/>
</dbReference>
<dbReference type="FunFam" id="2.40.50.140:FF:000077">
    <property type="entry name" value="Primosomal replication protein N"/>
    <property type="match status" value="1"/>
</dbReference>
<dbReference type="Gene3D" id="2.40.50.140">
    <property type="entry name" value="Nucleic acid-binding proteins"/>
    <property type="match status" value="1"/>
</dbReference>
<dbReference type="HAMAP" id="MF_00720">
    <property type="entry name" value="PriB"/>
    <property type="match status" value="1"/>
</dbReference>
<dbReference type="InterPro" id="IPR012340">
    <property type="entry name" value="NA-bd_OB-fold"/>
</dbReference>
<dbReference type="InterPro" id="IPR000424">
    <property type="entry name" value="Primosome_PriB/ssb"/>
</dbReference>
<dbReference type="InterPro" id="IPR023646">
    <property type="entry name" value="Prisomal_replication_PriB"/>
</dbReference>
<dbReference type="NCBIfam" id="TIGR04418">
    <property type="entry name" value="PriB_gamma"/>
    <property type="match status" value="1"/>
</dbReference>
<dbReference type="Pfam" id="PF22657">
    <property type="entry name" value="SSB_1"/>
    <property type="match status" value="1"/>
</dbReference>
<dbReference type="PIRSF" id="PIRSF003135">
    <property type="entry name" value="Primosomal_n"/>
    <property type="match status" value="1"/>
</dbReference>
<dbReference type="SUPFAM" id="SSF50249">
    <property type="entry name" value="Nucleic acid-binding proteins"/>
    <property type="match status" value="1"/>
</dbReference>
<dbReference type="PROSITE" id="PS50935">
    <property type="entry name" value="SSB"/>
    <property type="match status" value="1"/>
</dbReference>
<accession>B7NGD5</accession>
<keyword id="KW-0235">DNA replication</keyword>
<keyword id="KW-0238">DNA-binding</keyword>
<keyword id="KW-0639">Primosome</keyword>
<gene>
    <name evidence="1" type="primary">priB</name>
    <name type="ordered locus">ECUMN_4734</name>
</gene>
<name>PRIB_ECOLU</name>